<name>BIRC5_RAT</name>
<gene>
    <name type="primary">Birc5</name>
</gene>
<organism>
    <name type="scientific">Rattus norvegicus</name>
    <name type="common">Rat</name>
    <dbReference type="NCBI Taxonomy" id="10116"/>
    <lineage>
        <taxon>Eukaryota</taxon>
        <taxon>Metazoa</taxon>
        <taxon>Chordata</taxon>
        <taxon>Craniata</taxon>
        <taxon>Vertebrata</taxon>
        <taxon>Euteleostomi</taxon>
        <taxon>Mammalia</taxon>
        <taxon>Eutheria</taxon>
        <taxon>Euarchontoglires</taxon>
        <taxon>Glires</taxon>
        <taxon>Rodentia</taxon>
        <taxon>Myomorpha</taxon>
        <taxon>Muroidea</taxon>
        <taxon>Muridae</taxon>
        <taxon>Murinae</taxon>
        <taxon>Rattus</taxon>
    </lineage>
</organism>
<proteinExistence type="evidence at transcript level"/>
<reference key="1">
    <citation type="submission" date="2000-06" db="EMBL/GenBank/DDBJ databases">
        <title>Molecular cloning and characterization of rat survivin.</title>
        <authorList>
            <person name="Chen D."/>
            <person name="Cao G."/>
            <person name="Chen J."/>
        </authorList>
    </citation>
    <scope>NUCLEOTIDE SEQUENCE [MRNA]</scope>
    <source>
        <strain>Sprague-Dawley</strain>
    </source>
</reference>
<keyword id="KW-0007">Acetylation</keyword>
<keyword id="KW-0053">Apoptosis</keyword>
<keyword id="KW-0131">Cell cycle</keyword>
<keyword id="KW-0132">Cell division</keyword>
<keyword id="KW-0137">Centromere</keyword>
<keyword id="KW-0158">Chromosome</keyword>
<keyword id="KW-0159">Chromosome partition</keyword>
<keyword id="KW-0963">Cytoplasm</keyword>
<keyword id="KW-0206">Cytoskeleton</keyword>
<keyword id="KW-0995">Kinetochore</keyword>
<keyword id="KW-0479">Metal-binding</keyword>
<keyword id="KW-0493">Microtubule</keyword>
<keyword id="KW-0498">Mitosis</keyword>
<keyword id="KW-0539">Nucleus</keyword>
<keyword id="KW-0597">Phosphoprotein</keyword>
<keyword id="KW-0646">Protease inhibitor</keyword>
<keyword id="KW-1185">Reference proteome</keyword>
<keyword id="KW-0678">Repressor</keyword>
<keyword id="KW-0789">Thiol protease inhibitor</keyword>
<keyword id="KW-0804">Transcription</keyword>
<keyword id="KW-0805">Transcription regulation</keyword>
<keyword id="KW-0832">Ubl conjugation</keyword>
<keyword id="KW-0862">Zinc</keyword>
<sequence>MGATALPPIWQMYLKDHRIYTFKNWPFLEDCSCTPERMAEAGFIHCPTENEPDLAQCFFCFKELEGWEPDDNPIEEHRKHSPGCAFLTVKKQVEELTVSEFLKLDKQRAKNKIAKETNNKQKEFEETRRTVRQSIEQLAALR</sequence>
<feature type="chain" id="PRO_0000122360" description="Baculoviral IAP repeat-containing protein 5">
    <location>
        <begin position="1"/>
        <end position="142"/>
    </location>
</feature>
<feature type="repeat" description="BIR">
    <location>
        <begin position="18"/>
        <end position="88"/>
    </location>
</feature>
<feature type="binding site" evidence="3">
    <location>
        <position position="57"/>
    </location>
    <ligand>
        <name>Zn(2+)</name>
        <dbReference type="ChEBI" id="CHEBI:29105"/>
    </ligand>
</feature>
<feature type="binding site" evidence="3">
    <location>
        <position position="60"/>
    </location>
    <ligand>
        <name>Zn(2+)</name>
        <dbReference type="ChEBI" id="CHEBI:29105"/>
    </ligand>
</feature>
<feature type="binding site" evidence="3">
    <location>
        <position position="77"/>
    </location>
    <ligand>
        <name>Zn(2+)</name>
        <dbReference type="ChEBI" id="CHEBI:29105"/>
    </ligand>
</feature>
<feature type="binding site" evidence="3">
    <location>
        <position position="84"/>
    </location>
    <ligand>
        <name>Zn(2+)</name>
        <dbReference type="ChEBI" id="CHEBI:29105"/>
    </ligand>
</feature>
<feature type="site" description="Interaction with FBXL7" evidence="2">
    <location>
        <position position="126"/>
    </location>
</feature>
<feature type="modified residue" description="N6-acetyllysine" evidence="2">
    <location>
        <position position="23"/>
    </location>
</feature>
<feature type="modified residue" description="Phosphothreonine; by CDK1 and CDK15" evidence="2">
    <location>
        <position position="34"/>
    </location>
</feature>
<feature type="modified residue" description="Phosphothreonine" evidence="2">
    <location>
        <position position="48"/>
    </location>
</feature>
<feature type="modified residue" description="N6-acetyllysine" evidence="2">
    <location>
        <position position="90"/>
    </location>
</feature>
<feature type="modified residue" description="N6-acetyllysine" evidence="2">
    <location>
        <position position="110"/>
    </location>
</feature>
<feature type="modified residue" description="N6-acetyllysine" evidence="2">
    <location>
        <position position="112"/>
    </location>
</feature>
<feature type="modified residue" description="N6-acetyllysine" evidence="2">
    <location>
        <position position="115"/>
    </location>
</feature>
<feature type="modified residue" description="Phosphothreonine; by AURKB" evidence="2">
    <location>
        <position position="117"/>
    </location>
</feature>
<protein>
    <recommendedName>
        <fullName>Baculoviral IAP repeat-containing protein 5</fullName>
    </recommendedName>
    <alternativeName>
        <fullName>Apoptosis inhibitor survivin</fullName>
    </alternativeName>
</protein>
<comment type="function">
    <text evidence="2">Multitasking protein that has dual roles in promoting cell proliferation and preventing apoptosis (By similarity). Component of a chromosome passage protein complex (CPC) which is essential for chromosome alignment and segregation during mitosis and cytokinesis (By similarity). Acts as an important regulator of the localization of this complex; directs CPC movement to different locations from the inner centromere during prometaphase to midbody during cytokinesis and participates in the organization of the center spindle by associating with polymerized microtubules (By similarity). Involved in the recruitment of CPC to centromeres during early mitosis via association with histone H3 phosphorylated at 'Thr-3' (H3pT3) during mitosis (By similarity). The complex with RAN plays a role in mitotic spindle formation by serving as a physical scaffold to help deliver the RAN effector molecule TPX2 to microtubules (By similarity). May counteract a default induction of apoptosis in G2/M phase (By similarity). The acetylated form represses STAT3 transactivation of target gene promoters (By similarity). May play a role in neoplasia. Inhibitor of CASP3 and CASP7 (By similarity). Essential for the maintenance of mitochondrial integrity and function (By similarity).</text>
</comment>
<comment type="subunit">
    <text evidence="2">Monomer or homodimer. Exists as a homodimer in the apo state and as a monomer in the CPC-bound state. The monomer protects cells against apoptosis more efficiently than the dimer. Only the dimeric form is capable of enhancing tubulin stability in cells. When phosphorylated, interacts with LAMTOR5/HBXIP; the resulting complex binds pro-CASP9, as well as active CASP9, but much less efficiently. Component of the chromosomal passenger complex (CPC) composed of at least BIRC5/survivin, CDCA8/borealin, INCENP, AURKB or AURKC; in the complex forms a triple-helix bundle-based subcomplex with INCENP and CDCA8. Interacts with JTB. Interacts (via BIR domain) with histone H3 phosphorylated at 'Thr-3' (H3pT3). Interacts with EVI5. Interacts with GTP-bound RAN in both the S and M phases of the cell cycle. Interacts with USP9X. Interacts with tubulin. Interacts with BIRC2/c-IAP1. The monomeric form interacts with XIAP/BIRC4. Both the dimeric and monomeric form can interact with DIABLO/SMAC. Interacts with BIRC6/bruce. Interacts with FBXL7; this interaction facilitates the polyubiquitination and subsequent proteasomal degradation of BIRC5 by the SCF(FBXL7) E3 ubiquitin-protein ligase complex (By similarity).</text>
</comment>
<comment type="subcellular location">
    <subcellularLocation>
        <location evidence="2">Cytoplasm</location>
    </subcellularLocation>
    <subcellularLocation>
        <location evidence="2">Nucleus</location>
    </subcellularLocation>
    <subcellularLocation>
        <location evidence="2">Chromosome</location>
    </subcellularLocation>
    <subcellularLocation>
        <location evidence="2">Chromosome</location>
        <location evidence="2">Centromere</location>
    </subcellularLocation>
    <subcellularLocation>
        <location evidence="2">Cytoplasm</location>
        <location evidence="2">Cytoskeleton</location>
        <location evidence="2">Spindle</location>
    </subcellularLocation>
    <subcellularLocation>
        <location evidence="2">Chromosome</location>
        <location evidence="2">Centromere</location>
        <location evidence="2">Kinetochore</location>
    </subcellularLocation>
    <subcellularLocation>
        <location evidence="2">Midbody</location>
    </subcellularLocation>
    <text evidence="1 2">Localizes at the centromeres from prophase to metaphase, at the spindle midzone during anaphase and a the midbody during telophase and cytokinesis. Accumulates in the nucleus upon treatment with leptomycin B (LMB), a XPO1/CRM1 nuclear export inhibitor (By similarity). Localizes on chromosome arms and inner centromeres from prophase through metaphase. Localizes to kinetochores in metaphase, distributes to the midzone microtubules in anaphase and at telophase, localizes exclusively to the midbody. Colocalizes with AURKB at mitotic chromosomes (By similarity).</text>
</comment>
<comment type="domain">
    <text evidence="2">The BIR repeat is necessary and sufficient for LAMTOR5 binding.</text>
</comment>
<comment type="PTM">
    <text evidence="2">Ubiquitinated by the Cul9-RING ubiquitin-protein ligase complex, leading to its degradation. Ubiquitination is required for centrosomal targeting. Deubiquitinated by USP35 or USP38; leading to stabilization.</text>
</comment>
<comment type="PTM">
    <text evidence="2">In vitro phosphorylation at Thr-117 by AURKB prevents interaction with INCENP and localization to mitotic chromosomes. Phosphorylation at Thr-48 by CK2 is critical for its mitotic and anti-apoptotic activities. Phosphorylation at Thr-34 by CDK15 is critical for its anti-apoptotic activity.</text>
</comment>
<comment type="similarity">
    <text evidence="4">Belongs to the IAP family.</text>
</comment>
<accession>Q9JHY7</accession>
<evidence type="ECO:0000250" key="1">
    <source>
        <dbReference type="UniProtKB" id="E3SCZ8"/>
    </source>
</evidence>
<evidence type="ECO:0000250" key="2">
    <source>
        <dbReference type="UniProtKB" id="O15392"/>
    </source>
</evidence>
<evidence type="ECO:0000255" key="3">
    <source>
        <dbReference type="PROSITE-ProRule" id="PRU00029"/>
    </source>
</evidence>
<evidence type="ECO:0000305" key="4"/>
<dbReference type="EMBL" id="AF276775">
    <property type="protein sequence ID" value="AAF82586.1"/>
    <property type="molecule type" value="mRNA"/>
</dbReference>
<dbReference type="RefSeq" id="NP_071610.1">
    <property type="nucleotide sequence ID" value="NM_022274.1"/>
</dbReference>
<dbReference type="SMR" id="Q9JHY7"/>
<dbReference type="FunCoup" id="Q9JHY7">
    <property type="interactions" value="1063"/>
</dbReference>
<dbReference type="STRING" id="10116.ENSRNOP00000065784"/>
<dbReference type="MEROPS" id="I32.005"/>
<dbReference type="PhosphoSitePlus" id="Q9JHY7"/>
<dbReference type="PaxDb" id="10116-ENSRNOP00000065784"/>
<dbReference type="GeneID" id="64041"/>
<dbReference type="KEGG" id="rno:64041"/>
<dbReference type="AGR" id="RGD:70499"/>
<dbReference type="CTD" id="332"/>
<dbReference type="RGD" id="70499">
    <property type="gene designation" value="Birc5"/>
</dbReference>
<dbReference type="eggNOG" id="KOG1101">
    <property type="taxonomic scope" value="Eukaryota"/>
</dbReference>
<dbReference type="InParanoid" id="Q9JHY7"/>
<dbReference type="PhylomeDB" id="Q9JHY7"/>
<dbReference type="Reactome" id="R-RNO-141444">
    <property type="pathway name" value="Amplification of signal from unattached kinetochores via a MAD2 inhibitory signal"/>
</dbReference>
<dbReference type="Reactome" id="R-RNO-2467813">
    <property type="pathway name" value="Separation of Sister Chromatids"/>
</dbReference>
<dbReference type="Reactome" id="R-RNO-2500257">
    <property type="pathway name" value="Resolution of Sister Chromatid Cohesion"/>
</dbReference>
<dbReference type="Reactome" id="R-RNO-4615885">
    <property type="pathway name" value="SUMOylation of DNA replication proteins"/>
</dbReference>
<dbReference type="Reactome" id="R-RNO-5663220">
    <property type="pathway name" value="RHO GTPases Activate Formins"/>
</dbReference>
<dbReference type="Reactome" id="R-RNO-68877">
    <property type="pathway name" value="Mitotic Prometaphase"/>
</dbReference>
<dbReference type="Reactome" id="R-RNO-8951664">
    <property type="pathway name" value="Neddylation"/>
</dbReference>
<dbReference type="Reactome" id="R-RNO-9648025">
    <property type="pathway name" value="EML4 and NUDC in mitotic spindle formation"/>
</dbReference>
<dbReference type="PRO" id="PR:Q9JHY7"/>
<dbReference type="Proteomes" id="UP000002494">
    <property type="component" value="Unplaced"/>
</dbReference>
<dbReference type="GO" id="GO:0016324">
    <property type="term" value="C:apical plasma membrane"/>
    <property type="evidence" value="ECO:0000314"/>
    <property type="project" value="RGD"/>
</dbReference>
<dbReference type="GO" id="GO:0005814">
    <property type="term" value="C:centriole"/>
    <property type="evidence" value="ECO:0000250"/>
    <property type="project" value="UniProtKB"/>
</dbReference>
<dbReference type="GO" id="GO:0032133">
    <property type="term" value="C:chromosome passenger complex"/>
    <property type="evidence" value="ECO:0000250"/>
    <property type="project" value="UniProtKB"/>
</dbReference>
<dbReference type="GO" id="GO:0000775">
    <property type="term" value="C:chromosome, centromeric region"/>
    <property type="evidence" value="ECO:0000250"/>
    <property type="project" value="UniProtKB"/>
</dbReference>
<dbReference type="GO" id="GO:0005737">
    <property type="term" value="C:cytoplasm"/>
    <property type="evidence" value="ECO:0000250"/>
    <property type="project" value="UniProtKB"/>
</dbReference>
<dbReference type="GO" id="GO:0005881">
    <property type="term" value="C:cytoplasmic microtubule"/>
    <property type="evidence" value="ECO:0000250"/>
    <property type="project" value="UniProtKB"/>
</dbReference>
<dbReference type="GO" id="GO:0005829">
    <property type="term" value="C:cytosol"/>
    <property type="evidence" value="ECO:0000250"/>
    <property type="project" value="UniProtKB"/>
</dbReference>
<dbReference type="GO" id="GO:0031021">
    <property type="term" value="C:interphase microtubule organizing center"/>
    <property type="evidence" value="ECO:0000250"/>
    <property type="project" value="UniProtKB"/>
</dbReference>
<dbReference type="GO" id="GO:0000776">
    <property type="term" value="C:kinetochore"/>
    <property type="evidence" value="ECO:0000250"/>
    <property type="project" value="UniProtKB"/>
</dbReference>
<dbReference type="GO" id="GO:0015630">
    <property type="term" value="C:microtubule cytoskeleton"/>
    <property type="evidence" value="ECO:0000266"/>
    <property type="project" value="RGD"/>
</dbReference>
<dbReference type="GO" id="GO:0030496">
    <property type="term" value="C:midbody"/>
    <property type="evidence" value="ECO:0000250"/>
    <property type="project" value="UniProtKB"/>
</dbReference>
<dbReference type="GO" id="GO:0000228">
    <property type="term" value="C:nuclear chromosome"/>
    <property type="evidence" value="ECO:0000266"/>
    <property type="project" value="RGD"/>
</dbReference>
<dbReference type="GO" id="GO:0005634">
    <property type="term" value="C:nucleus"/>
    <property type="evidence" value="ECO:0000266"/>
    <property type="project" value="RGD"/>
</dbReference>
<dbReference type="GO" id="GO:0005876">
    <property type="term" value="C:spindle microtubule"/>
    <property type="evidence" value="ECO:0000250"/>
    <property type="project" value="UniProtKB"/>
</dbReference>
<dbReference type="GO" id="GO:0051233">
    <property type="term" value="C:spindle midzone"/>
    <property type="evidence" value="ECO:0000318"/>
    <property type="project" value="GO_Central"/>
</dbReference>
<dbReference type="GO" id="GO:1990713">
    <property type="term" value="C:survivin complex"/>
    <property type="evidence" value="ECO:0000266"/>
    <property type="project" value="RGD"/>
</dbReference>
<dbReference type="GO" id="GO:0004869">
    <property type="term" value="F:cysteine-type endopeptidase inhibitor activity"/>
    <property type="evidence" value="ECO:0007669"/>
    <property type="project" value="UniProtKB-KW"/>
</dbReference>
<dbReference type="GO" id="GO:0043027">
    <property type="term" value="F:cysteine-type endopeptidase inhibitor activity involved in apoptotic process"/>
    <property type="evidence" value="ECO:0000250"/>
    <property type="project" value="UniProtKB"/>
</dbReference>
<dbReference type="GO" id="GO:0019899">
    <property type="term" value="F:enzyme binding"/>
    <property type="evidence" value="ECO:0000266"/>
    <property type="project" value="RGD"/>
</dbReference>
<dbReference type="GO" id="GO:0042802">
    <property type="term" value="F:identical protein binding"/>
    <property type="evidence" value="ECO:0000266"/>
    <property type="project" value="RGD"/>
</dbReference>
<dbReference type="GO" id="GO:0008017">
    <property type="term" value="F:microtubule binding"/>
    <property type="evidence" value="ECO:0000250"/>
    <property type="project" value="UniProtKB"/>
</dbReference>
<dbReference type="GO" id="GO:0046982">
    <property type="term" value="F:protein heterodimerization activity"/>
    <property type="evidence" value="ECO:0000266"/>
    <property type="project" value="RGD"/>
</dbReference>
<dbReference type="GO" id="GO:0042803">
    <property type="term" value="F:protein homodimerization activity"/>
    <property type="evidence" value="ECO:0000250"/>
    <property type="project" value="UniProtKB"/>
</dbReference>
<dbReference type="GO" id="GO:0051087">
    <property type="term" value="F:protein-folding chaperone binding"/>
    <property type="evidence" value="ECO:0000266"/>
    <property type="project" value="RGD"/>
</dbReference>
<dbReference type="GO" id="GO:0031267">
    <property type="term" value="F:small GTPase binding"/>
    <property type="evidence" value="ECO:0000266"/>
    <property type="project" value="RGD"/>
</dbReference>
<dbReference type="GO" id="GO:0015631">
    <property type="term" value="F:tubulin binding"/>
    <property type="evidence" value="ECO:0000250"/>
    <property type="project" value="UniProtKB"/>
</dbReference>
<dbReference type="GO" id="GO:0008270">
    <property type="term" value="F:zinc ion binding"/>
    <property type="evidence" value="ECO:0000250"/>
    <property type="project" value="UniProtKB"/>
</dbReference>
<dbReference type="GO" id="GO:0006915">
    <property type="term" value="P:apoptotic process"/>
    <property type="evidence" value="ECO:0007669"/>
    <property type="project" value="UniProtKB-KW"/>
</dbReference>
<dbReference type="GO" id="GO:0051301">
    <property type="term" value="P:cell division"/>
    <property type="evidence" value="ECO:0000250"/>
    <property type="project" value="UniProtKB"/>
</dbReference>
<dbReference type="GO" id="GO:0071361">
    <property type="term" value="P:cellular response to ethanol"/>
    <property type="evidence" value="ECO:0000270"/>
    <property type="project" value="RGD"/>
</dbReference>
<dbReference type="GO" id="GO:0036216">
    <property type="term" value="P:cellular response to stem cell factor stimulus"/>
    <property type="evidence" value="ECO:0000270"/>
    <property type="project" value="RGD"/>
</dbReference>
<dbReference type="GO" id="GO:0007059">
    <property type="term" value="P:chromosome segregation"/>
    <property type="evidence" value="ECO:0000318"/>
    <property type="project" value="GO_Central"/>
</dbReference>
<dbReference type="GO" id="GO:0051303">
    <property type="term" value="P:establishment of chromosome localization"/>
    <property type="evidence" value="ECO:0000250"/>
    <property type="project" value="UniProtKB"/>
</dbReference>
<dbReference type="GO" id="GO:0000086">
    <property type="term" value="P:G2/M transition of mitotic cell cycle"/>
    <property type="evidence" value="ECO:0000250"/>
    <property type="project" value="UniProtKB"/>
</dbReference>
<dbReference type="GO" id="GO:0007127">
    <property type="term" value="P:meiosis I"/>
    <property type="evidence" value="ECO:0000266"/>
    <property type="project" value="RGD"/>
</dbReference>
<dbReference type="GO" id="GO:0000226">
    <property type="term" value="P:microtubule cytoskeleton organization"/>
    <property type="evidence" value="ECO:0000266"/>
    <property type="project" value="RGD"/>
</dbReference>
<dbReference type="GO" id="GO:0000281">
    <property type="term" value="P:mitotic cytokinesis"/>
    <property type="evidence" value="ECO:0000250"/>
    <property type="project" value="UniProtKB"/>
</dbReference>
<dbReference type="GO" id="GO:0007094">
    <property type="term" value="P:mitotic spindle assembly checkpoint signaling"/>
    <property type="evidence" value="ECO:0000250"/>
    <property type="project" value="UniProtKB"/>
</dbReference>
<dbReference type="GO" id="GO:0007052">
    <property type="term" value="P:mitotic spindle organization"/>
    <property type="evidence" value="ECO:0000318"/>
    <property type="project" value="GO_Central"/>
</dbReference>
<dbReference type="GO" id="GO:0043066">
    <property type="term" value="P:negative regulation of apoptotic process"/>
    <property type="evidence" value="ECO:0000315"/>
    <property type="project" value="RGD"/>
</dbReference>
<dbReference type="GO" id="GO:0045892">
    <property type="term" value="P:negative regulation of DNA-templated transcription"/>
    <property type="evidence" value="ECO:0000250"/>
    <property type="project" value="UniProtKB"/>
</dbReference>
<dbReference type="GO" id="GO:0043524">
    <property type="term" value="P:negative regulation of neuron apoptotic process"/>
    <property type="evidence" value="ECO:0000266"/>
    <property type="project" value="RGD"/>
</dbReference>
<dbReference type="GO" id="GO:0045787">
    <property type="term" value="P:positive regulation of cell cycle"/>
    <property type="evidence" value="ECO:0000315"/>
    <property type="project" value="RGD"/>
</dbReference>
<dbReference type="GO" id="GO:0031536">
    <property type="term" value="P:positive regulation of exit from mitosis"/>
    <property type="evidence" value="ECO:0000250"/>
    <property type="project" value="UniProtKB"/>
</dbReference>
<dbReference type="GO" id="GO:0045931">
    <property type="term" value="P:positive regulation of mitotic cell cycle"/>
    <property type="evidence" value="ECO:0000250"/>
    <property type="project" value="UniProtKB"/>
</dbReference>
<dbReference type="GO" id="GO:0031503">
    <property type="term" value="P:protein-containing complex localization"/>
    <property type="evidence" value="ECO:0000250"/>
    <property type="project" value="UniProtKB"/>
</dbReference>
<dbReference type="GO" id="GO:0061178">
    <property type="term" value="P:regulation of insulin secretion involved in cellular response to glucose stimulus"/>
    <property type="evidence" value="ECO:0000266"/>
    <property type="project" value="RGD"/>
</dbReference>
<dbReference type="GO" id="GO:0007346">
    <property type="term" value="P:regulation of mitotic cell cycle"/>
    <property type="evidence" value="ECO:0000266"/>
    <property type="project" value="RGD"/>
</dbReference>
<dbReference type="GO" id="GO:0061469">
    <property type="term" value="P:regulation of type B pancreatic cell proliferation"/>
    <property type="evidence" value="ECO:0000266"/>
    <property type="project" value="RGD"/>
</dbReference>
<dbReference type="GO" id="GO:0051384">
    <property type="term" value="P:response to glucocorticoid"/>
    <property type="evidence" value="ECO:0000270"/>
    <property type="project" value="RGD"/>
</dbReference>
<dbReference type="GO" id="GO:0043434">
    <property type="term" value="P:response to peptide hormone"/>
    <property type="evidence" value="ECO:0000270"/>
    <property type="project" value="RGD"/>
</dbReference>
<dbReference type="GO" id="GO:0009410">
    <property type="term" value="P:response to xenobiotic stimulus"/>
    <property type="evidence" value="ECO:0000270"/>
    <property type="project" value="RGD"/>
</dbReference>
<dbReference type="GO" id="GO:0007605">
    <property type="term" value="P:sensory perception of sound"/>
    <property type="evidence" value="ECO:0000266"/>
    <property type="project" value="RGD"/>
</dbReference>
<dbReference type="CDD" id="cd00022">
    <property type="entry name" value="BIR"/>
    <property type="match status" value="1"/>
</dbReference>
<dbReference type="FunFam" id="1.10.1170.10:FF:000009">
    <property type="entry name" value="Baculoviral IAP repeat-containing protein 5"/>
    <property type="match status" value="1"/>
</dbReference>
<dbReference type="Gene3D" id="1.10.1170.10">
    <property type="entry name" value="Inhibitor Of Apoptosis Protein (2mihbC-IAP-1), Chain A"/>
    <property type="match status" value="1"/>
</dbReference>
<dbReference type="InterPro" id="IPR051190">
    <property type="entry name" value="Baculoviral_IAP"/>
</dbReference>
<dbReference type="InterPro" id="IPR001370">
    <property type="entry name" value="BIR_rpt"/>
</dbReference>
<dbReference type="PANTHER" id="PTHR46771:SF3">
    <property type="entry name" value="BACULOVIRAL IAP REPEAT-CONTAINING PROTEIN 5"/>
    <property type="match status" value="1"/>
</dbReference>
<dbReference type="PANTHER" id="PTHR46771">
    <property type="entry name" value="DETERIN"/>
    <property type="match status" value="1"/>
</dbReference>
<dbReference type="Pfam" id="PF00653">
    <property type="entry name" value="BIR"/>
    <property type="match status" value="1"/>
</dbReference>
<dbReference type="SMART" id="SM00238">
    <property type="entry name" value="BIR"/>
    <property type="match status" value="1"/>
</dbReference>
<dbReference type="SUPFAM" id="SSF57924">
    <property type="entry name" value="Inhibitor of apoptosis (IAP) repeat"/>
    <property type="match status" value="1"/>
</dbReference>
<dbReference type="PROSITE" id="PS50143">
    <property type="entry name" value="BIR_REPEAT_2"/>
    <property type="match status" value="1"/>
</dbReference>